<organism>
    <name type="scientific">Herminiimonas arsenicoxydans</name>
    <dbReference type="NCBI Taxonomy" id="204773"/>
    <lineage>
        <taxon>Bacteria</taxon>
        <taxon>Pseudomonadati</taxon>
        <taxon>Pseudomonadota</taxon>
        <taxon>Betaproteobacteria</taxon>
        <taxon>Burkholderiales</taxon>
        <taxon>Oxalobacteraceae</taxon>
        <taxon>Herminiimonas</taxon>
    </lineage>
</organism>
<gene>
    <name evidence="1" type="primary">groES</name>
    <name evidence="1" type="synonym">groS</name>
    <name type="ordered locus">HEAR2551</name>
</gene>
<evidence type="ECO:0000255" key="1">
    <source>
        <dbReference type="HAMAP-Rule" id="MF_00580"/>
    </source>
</evidence>
<feature type="chain" id="PRO_1000025274" description="Co-chaperonin GroES">
    <location>
        <begin position="1"/>
        <end position="96"/>
    </location>
</feature>
<reference key="1">
    <citation type="journal article" date="2007" name="PLoS Genet.">
        <title>A tale of two oxidation states: bacterial colonization of arsenic-rich environments.</title>
        <authorList>
            <person name="Muller D."/>
            <person name="Medigue C."/>
            <person name="Koechler S."/>
            <person name="Barbe V."/>
            <person name="Barakat M."/>
            <person name="Talla E."/>
            <person name="Bonnefoy V."/>
            <person name="Krin E."/>
            <person name="Arsene-Ploetze F."/>
            <person name="Carapito C."/>
            <person name="Chandler M."/>
            <person name="Cournoyer B."/>
            <person name="Cruveiller S."/>
            <person name="Dossat C."/>
            <person name="Duval S."/>
            <person name="Heymann M."/>
            <person name="Leize E."/>
            <person name="Lieutaud A."/>
            <person name="Lievremont D."/>
            <person name="Makita Y."/>
            <person name="Mangenot S."/>
            <person name="Nitschke W."/>
            <person name="Ortet P."/>
            <person name="Perdrial N."/>
            <person name="Schoepp B."/>
            <person name="Siguier P."/>
            <person name="Simeonova D.D."/>
            <person name="Rouy Z."/>
            <person name="Segurens B."/>
            <person name="Turlin E."/>
            <person name="Vallenet D."/>
            <person name="van Dorsselaer A."/>
            <person name="Weiss S."/>
            <person name="Weissenbach J."/>
            <person name="Lett M.-C."/>
            <person name="Danchin A."/>
            <person name="Bertin P.N."/>
        </authorList>
    </citation>
    <scope>NUCLEOTIDE SEQUENCE [LARGE SCALE GENOMIC DNA]</scope>
    <source>
        <strain>ULPAs1</strain>
    </source>
</reference>
<sequence length="96" mass="10520">MNLRPLHDRVIVKRLDQETKTASGLIIPEAAAEKPDQGEVLAIGNGKILDDGKVRPLDVKVGDRVLFGKYAGQSVKVDGNEVLVMREEDIMAIVQK</sequence>
<keyword id="KW-0143">Chaperone</keyword>
<keyword id="KW-0963">Cytoplasm</keyword>
<keyword id="KW-1185">Reference proteome</keyword>
<dbReference type="EMBL" id="CU207211">
    <property type="protein sequence ID" value="CAL62673.1"/>
    <property type="molecule type" value="Genomic_DNA"/>
</dbReference>
<dbReference type="SMR" id="A4G836"/>
<dbReference type="STRING" id="204773.HEAR2551"/>
<dbReference type="KEGG" id="har:HEAR2551"/>
<dbReference type="eggNOG" id="COG0234">
    <property type="taxonomic scope" value="Bacteria"/>
</dbReference>
<dbReference type="HOGENOM" id="CLU_132825_2_0_4"/>
<dbReference type="OrthoDB" id="9806791at2"/>
<dbReference type="Proteomes" id="UP000006697">
    <property type="component" value="Chromosome"/>
</dbReference>
<dbReference type="GO" id="GO:0005737">
    <property type="term" value="C:cytoplasm"/>
    <property type="evidence" value="ECO:0007669"/>
    <property type="project" value="UniProtKB-SubCell"/>
</dbReference>
<dbReference type="GO" id="GO:0005524">
    <property type="term" value="F:ATP binding"/>
    <property type="evidence" value="ECO:0007669"/>
    <property type="project" value="InterPro"/>
</dbReference>
<dbReference type="GO" id="GO:0046872">
    <property type="term" value="F:metal ion binding"/>
    <property type="evidence" value="ECO:0007669"/>
    <property type="project" value="TreeGrafter"/>
</dbReference>
<dbReference type="GO" id="GO:0044183">
    <property type="term" value="F:protein folding chaperone"/>
    <property type="evidence" value="ECO:0007669"/>
    <property type="project" value="InterPro"/>
</dbReference>
<dbReference type="GO" id="GO:0051087">
    <property type="term" value="F:protein-folding chaperone binding"/>
    <property type="evidence" value="ECO:0007669"/>
    <property type="project" value="TreeGrafter"/>
</dbReference>
<dbReference type="GO" id="GO:0051082">
    <property type="term" value="F:unfolded protein binding"/>
    <property type="evidence" value="ECO:0007669"/>
    <property type="project" value="TreeGrafter"/>
</dbReference>
<dbReference type="GO" id="GO:0051085">
    <property type="term" value="P:chaperone cofactor-dependent protein refolding"/>
    <property type="evidence" value="ECO:0007669"/>
    <property type="project" value="TreeGrafter"/>
</dbReference>
<dbReference type="CDD" id="cd00320">
    <property type="entry name" value="cpn10"/>
    <property type="match status" value="1"/>
</dbReference>
<dbReference type="FunFam" id="2.30.33.40:FF:000001">
    <property type="entry name" value="10 kDa chaperonin"/>
    <property type="match status" value="1"/>
</dbReference>
<dbReference type="Gene3D" id="2.30.33.40">
    <property type="entry name" value="GroES chaperonin"/>
    <property type="match status" value="1"/>
</dbReference>
<dbReference type="HAMAP" id="MF_00580">
    <property type="entry name" value="CH10"/>
    <property type="match status" value="1"/>
</dbReference>
<dbReference type="InterPro" id="IPR020818">
    <property type="entry name" value="Chaperonin_GroES"/>
</dbReference>
<dbReference type="InterPro" id="IPR037124">
    <property type="entry name" value="Chaperonin_GroES_sf"/>
</dbReference>
<dbReference type="InterPro" id="IPR018369">
    <property type="entry name" value="Chaprnonin_Cpn10_CS"/>
</dbReference>
<dbReference type="InterPro" id="IPR011032">
    <property type="entry name" value="GroES-like_sf"/>
</dbReference>
<dbReference type="NCBIfam" id="NF001527">
    <property type="entry name" value="PRK00364.1-2"/>
    <property type="match status" value="1"/>
</dbReference>
<dbReference type="NCBIfam" id="NF001529">
    <property type="entry name" value="PRK00364.1-5"/>
    <property type="match status" value="1"/>
</dbReference>
<dbReference type="NCBIfam" id="NF001531">
    <property type="entry name" value="PRK00364.2-2"/>
    <property type="match status" value="1"/>
</dbReference>
<dbReference type="NCBIfam" id="NF001533">
    <property type="entry name" value="PRK00364.2-4"/>
    <property type="match status" value="1"/>
</dbReference>
<dbReference type="NCBIfam" id="NF001534">
    <property type="entry name" value="PRK00364.2-5"/>
    <property type="match status" value="1"/>
</dbReference>
<dbReference type="PANTHER" id="PTHR10772">
    <property type="entry name" value="10 KDA HEAT SHOCK PROTEIN"/>
    <property type="match status" value="1"/>
</dbReference>
<dbReference type="PANTHER" id="PTHR10772:SF58">
    <property type="entry name" value="CO-CHAPERONIN GROES"/>
    <property type="match status" value="1"/>
</dbReference>
<dbReference type="Pfam" id="PF00166">
    <property type="entry name" value="Cpn10"/>
    <property type="match status" value="1"/>
</dbReference>
<dbReference type="PRINTS" id="PR00297">
    <property type="entry name" value="CHAPERONIN10"/>
</dbReference>
<dbReference type="SMART" id="SM00883">
    <property type="entry name" value="Cpn10"/>
    <property type="match status" value="1"/>
</dbReference>
<dbReference type="SUPFAM" id="SSF50129">
    <property type="entry name" value="GroES-like"/>
    <property type="match status" value="1"/>
</dbReference>
<dbReference type="PROSITE" id="PS00681">
    <property type="entry name" value="CHAPERONINS_CPN10"/>
    <property type="match status" value="1"/>
</dbReference>
<comment type="function">
    <text evidence="1">Together with the chaperonin GroEL, plays an essential role in assisting protein folding. The GroEL-GroES system forms a nano-cage that allows encapsulation of the non-native substrate proteins and provides a physical environment optimized to promote and accelerate protein folding. GroES binds to the apical surface of the GroEL ring, thereby capping the opening of the GroEL channel.</text>
</comment>
<comment type="subunit">
    <text evidence="1">Heptamer of 7 subunits arranged in a ring. Interacts with the chaperonin GroEL.</text>
</comment>
<comment type="subcellular location">
    <subcellularLocation>
        <location evidence="1">Cytoplasm</location>
    </subcellularLocation>
</comment>
<comment type="similarity">
    <text evidence="1">Belongs to the GroES chaperonin family.</text>
</comment>
<name>CH10_HERAR</name>
<proteinExistence type="inferred from homology"/>
<protein>
    <recommendedName>
        <fullName evidence="1">Co-chaperonin GroES</fullName>
    </recommendedName>
    <alternativeName>
        <fullName evidence="1">10 kDa chaperonin</fullName>
    </alternativeName>
    <alternativeName>
        <fullName evidence="1">Chaperonin-10</fullName>
        <shortName evidence="1">Cpn10</shortName>
    </alternativeName>
</protein>
<accession>A4G836</accession>